<keyword id="KW-0963">Cytoplasm</keyword>
<keyword id="KW-0460">Magnesium</keyword>
<keyword id="KW-0479">Metal-binding</keyword>
<keyword id="KW-0566">Pantothenate biosynthesis</keyword>
<keyword id="KW-0808">Transferase</keyword>
<organism>
    <name type="scientific">Campylobacter fetus subsp. fetus (strain 82-40)</name>
    <dbReference type="NCBI Taxonomy" id="360106"/>
    <lineage>
        <taxon>Bacteria</taxon>
        <taxon>Pseudomonadati</taxon>
        <taxon>Campylobacterota</taxon>
        <taxon>Epsilonproteobacteria</taxon>
        <taxon>Campylobacterales</taxon>
        <taxon>Campylobacteraceae</taxon>
        <taxon>Campylobacter</taxon>
    </lineage>
</organism>
<name>PANB_CAMFF</name>
<accession>A0RN82</accession>
<evidence type="ECO:0000255" key="1">
    <source>
        <dbReference type="HAMAP-Rule" id="MF_00156"/>
    </source>
</evidence>
<proteinExistence type="inferred from homology"/>
<gene>
    <name evidence="1" type="primary">panB</name>
    <name type="ordered locus">CFF8240_0469</name>
</gene>
<dbReference type="EC" id="2.1.2.11" evidence="1"/>
<dbReference type="EMBL" id="CP000487">
    <property type="protein sequence ID" value="ABK81993.1"/>
    <property type="molecule type" value="Genomic_DNA"/>
</dbReference>
<dbReference type="SMR" id="A0RN82"/>
<dbReference type="KEGG" id="cff:CFF8240_0469"/>
<dbReference type="eggNOG" id="COG0413">
    <property type="taxonomic scope" value="Bacteria"/>
</dbReference>
<dbReference type="HOGENOM" id="CLU_036645_1_0_7"/>
<dbReference type="UniPathway" id="UPA00028">
    <property type="reaction ID" value="UER00003"/>
</dbReference>
<dbReference type="Proteomes" id="UP000000760">
    <property type="component" value="Chromosome"/>
</dbReference>
<dbReference type="GO" id="GO:0005737">
    <property type="term" value="C:cytoplasm"/>
    <property type="evidence" value="ECO:0007669"/>
    <property type="project" value="UniProtKB-SubCell"/>
</dbReference>
<dbReference type="GO" id="GO:0003864">
    <property type="term" value="F:3-methyl-2-oxobutanoate hydroxymethyltransferase activity"/>
    <property type="evidence" value="ECO:0007669"/>
    <property type="project" value="UniProtKB-UniRule"/>
</dbReference>
<dbReference type="GO" id="GO:0000287">
    <property type="term" value="F:magnesium ion binding"/>
    <property type="evidence" value="ECO:0007669"/>
    <property type="project" value="TreeGrafter"/>
</dbReference>
<dbReference type="GO" id="GO:0015940">
    <property type="term" value="P:pantothenate biosynthetic process"/>
    <property type="evidence" value="ECO:0007669"/>
    <property type="project" value="UniProtKB-UniRule"/>
</dbReference>
<dbReference type="CDD" id="cd06557">
    <property type="entry name" value="KPHMT-like"/>
    <property type="match status" value="1"/>
</dbReference>
<dbReference type="FunFam" id="3.20.20.60:FF:000003">
    <property type="entry name" value="3-methyl-2-oxobutanoate hydroxymethyltransferase"/>
    <property type="match status" value="1"/>
</dbReference>
<dbReference type="Gene3D" id="3.20.20.60">
    <property type="entry name" value="Phosphoenolpyruvate-binding domains"/>
    <property type="match status" value="1"/>
</dbReference>
<dbReference type="HAMAP" id="MF_00156">
    <property type="entry name" value="PanB"/>
    <property type="match status" value="1"/>
</dbReference>
<dbReference type="InterPro" id="IPR003700">
    <property type="entry name" value="Pantoate_hydroxy_MeTrfase"/>
</dbReference>
<dbReference type="InterPro" id="IPR015813">
    <property type="entry name" value="Pyrv/PenolPyrv_kinase-like_dom"/>
</dbReference>
<dbReference type="InterPro" id="IPR040442">
    <property type="entry name" value="Pyrv_kinase-like_dom_sf"/>
</dbReference>
<dbReference type="NCBIfam" id="TIGR00222">
    <property type="entry name" value="panB"/>
    <property type="match status" value="1"/>
</dbReference>
<dbReference type="NCBIfam" id="NF001452">
    <property type="entry name" value="PRK00311.1"/>
    <property type="match status" value="1"/>
</dbReference>
<dbReference type="PANTHER" id="PTHR20881">
    <property type="entry name" value="3-METHYL-2-OXOBUTANOATE HYDROXYMETHYLTRANSFERASE"/>
    <property type="match status" value="1"/>
</dbReference>
<dbReference type="PANTHER" id="PTHR20881:SF0">
    <property type="entry name" value="3-METHYL-2-OXOBUTANOATE HYDROXYMETHYLTRANSFERASE"/>
    <property type="match status" value="1"/>
</dbReference>
<dbReference type="Pfam" id="PF02548">
    <property type="entry name" value="Pantoate_transf"/>
    <property type="match status" value="1"/>
</dbReference>
<dbReference type="PIRSF" id="PIRSF000388">
    <property type="entry name" value="Pantoate_hydroxy_MeTrfase"/>
    <property type="match status" value="1"/>
</dbReference>
<dbReference type="SUPFAM" id="SSF51621">
    <property type="entry name" value="Phosphoenolpyruvate/pyruvate domain"/>
    <property type="match status" value="1"/>
</dbReference>
<sequence length="264" mass="29041">MKKVTINDLFMMKNREKIVMITAYDALFARLFDDYVDMILVGDSLNMSFGGKNETIGLSVDDMIYHTKAVQNGAKKAFLVVDMPFGSACTPQIALKNAIKIYKKTGCDAVKIEGTKEMADTIKLLSQNGIIVMSHIGLKPQMSRFEGGYKIKGKDELSAKSILEDAIVLESAGASLFLLEGIVSSVASEISQKLKVPTIGIGSGASCDGQVLVWSDAFGFFDEFKPKFVKRYLEGATLIKNSLKEYADEVKNSKFPSSQYEYTK</sequence>
<comment type="function">
    <text evidence="1">Catalyzes the reversible reaction in which hydroxymethyl group from 5,10-methylenetetrahydrofolate is transferred onto alpha-ketoisovalerate to form ketopantoate.</text>
</comment>
<comment type="catalytic activity">
    <reaction evidence="1">
        <text>3-methyl-2-oxobutanoate + (6R)-5,10-methylene-5,6,7,8-tetrahydrofolate + H2O = 2-dehydropantoate + (6S)-5,6,7,8-tetrahydrofolate</text>
        <dbReference type="Rhea" id="RHEA:11824"/>
        <dbReference type="ChEBI" id="CHEBI:11561"/>
        <dbReference type="ChEBI" id="CHEBI:11851"/>
        <dbReference type="ChEBI" id="CHEBI:15377"/>
        <dbReference type="ChEBI" id="CHEBI:15636"/>
        <dbReference type="ChEBI" id="CHEBI:57453"/>
        <dbReference type="EC" id="2.1.2.11"/>
    </reaction>
</comment>
<comment type="cofactor">
    <cofactor evidence="1">
        <name>Mg(2+)</name>
        <dbReference type="ChEBI" id="CHEBI:18420"/>
    </cofactor>
    <text evidence="1">Binds 1 Mg(2+) ion per subunit.</text>
</comment>
<comment type="pathway">
    <text evidence="1">Cofactor biosynthesis; (R)-pantothenate biosynthesis; (R)-pantoate from 3-methyl-2-oxobutanoate: step 1/2.</text>
</comment>
<comment type="subunit">
    <text evidence="1">Homodecamer; pentamer of dimers.</text>
</comment>
<comment type="subcellular location">
    <subcellularLocation>
        <location evidence="1">Cytoplasm</location>
    </subcellularLocation>
</comment>
<comment type="similarity">
    <text evidence="1">Belongs to the PanB family.</text>
</comment>
<reference key="1">
    <citation type="submission" date="2006-11" db="EMBL/GenBank/DDBJ databases">
        <title>Sequence of Campylobacter fetus subsp. fetus 82-40.</title>
        <authorList>
            <person name="Fouts D.E."/>
            <person name="Nelson K.E."/>
        </authorList>
    </citation>
    <scope>NUCLEOTIDE SEQUENCE [LARGE SCALE GENOMIC DNA]</scope>
    <source>
        <strain>82-40</strain>
    </source>
</reference>
<protein>
    <recommendedName>
        <fullName evidence="1">3-methyl-2-oxobutanoate hydroxymethyltransferase</fullName>
        <ecNumber evidence="1">2.1.2.11</ecNumber>
    </recommendedName>
    <alternativeName>
        <fullName evidence="1">Ketopantoate hydroxymethyltransferase</fullName>
        <shortName evidence="1">KPHMT</shortName>
    </alternativeName>
</protein>
<feature type="chain" id="PRO_0000297239" description="3-methyl-2-oxobutanoate hydroxymethyltransferase">
    <location>
        <begin position="1"/>
        <end position="264"/>
    </location>
</feature>
<feature type="active site" description="Proton acceptor" evidence="1">
    <location>
        <position position="180"/>
    </location>
</feature>
<feature type="binding site" evidence="1">
    <location>
        <begin position="43"/>
        <end position="44"/>
    </location>
    <ligand>
        <name>3-methyl-2-oxobutanoate</name>
        <dbReference type="ChEBI" id="CHEBI:11851"/>
    </ligand>
</feature>
<feature type="binding site" evidence="1">
    <location>
        <position position="43"/>
    </location>
    <ligand>
        <name>Mg(2+)</name>
        <dbReference type="ChEBI" id="CHEBI:18420"/>
    </ligand>
</feature>
<feature type="binding site" evidence="1">
    <location>
        <position position="82"/>
    </location>
    <ligand>
        <name>3-methyl-2-oxobutanoate</name>
        <dbReference type="ChEBI" id="CHEBI:11851"/>
    </ligand>
</feature>
<feature type="binding site" evidence="1">
    <location>
        <position position="82"/>
    </location>
    <ligand>
        <name>Mg(2+)</name>
        <dbReference type="ChEBI" id="CHEBI:18420"/>
    </ligand>
</feature>
<feature type="binding site" evidence="1">
    <location>
        <position position="111"/>
    </location>
    <ligand>
        <name>3-methyl-2-oxobutanoate</name>
        <dbReference type="ChEBI" id="CHEBI:11851"/>
    </ligand>
</feature>
<feature type="binding site" evidence="1">
    <location>
        <position position="113"/>
    </location>
    <ligand>
        <name>Mg(2+)</name>
        <dbReference type="ChEBI" id="CHEBI:18420"/>
    </ligand>
</feature>